<gene>
    <name type="primary">LTP3</name>
</gene>
<feature type="signal peptide" evidence="2">
    <location>
        <begin position="1"/>
        <end position="25"/>
    </location>
</feature>
<feature type="chain" id="PRO_0000018382" description="Non-specific lipid-transfer protein 3">
    <location>
        <begin position="26"/>
        <end position="118"/>
    </location>
</feature>
<feature type="disulfide bond" evidence="1">
    <location>
        <begin position="29"/>
        <end position="77"/>
    </location>
</feature>
<feature type="disulfide bond" evidence="1">
    <location>
        <begin position="39"/>
        <end position="54"/>
    </location>
</feature>
<feature type="disulfide bond" evidence="1">
    <location>
        <begin position="55"/>
        <end position="100"/>
    </location>
</feature>
<feature type="disulfide bond" evidence="1">
    <location>
        <begin position="75"/>
        <end position="114"/>
    </location>
</feature>
<sequence>MARAAATQLVLVAMVAAMLLVATDAAISCGQVSSALSPCISYARGNGAKPPVACCSGVKRLAGAAQSTADKQAACRCLKSLATSIKGINMGKVSGVPGKCGVSVPFPISMSTDCNKVH</sequence>
<proteinExistence type="inferred from homology"/>
<comment type="function">
    <text>Plant non-specific lipid-transfer proteins transfer phospholipids as well as galactolipids across membranes. May play a role in wax or cutin deposition in the cell walls of expanding epidermal cells and certain secretory tissues.</text>
</comment>
<comment type="similarity">
    <text evidence="3">Belongs to the plant LTP family.</text>
</comment>
<protein>
    <recommendedName>
        <fullName>Non-specific lipid-transfer protein 3</fullName>
        <shortName>LTP 3</shortName>
    </recommendedName>
    <alternativeName>
        <fullName>CW-19</fullName>
    </alternativeName>
    <alternativeName>
        <fullName>CW-20</fullName>
        <shortName>CW20</shortName>
    </alternativeName>
</protein>
<evidence type="ECO:0000250" key="1"/>
<evidence type="ECO:0000255" key="2"/>
<evidence type="ECO:0000305" key="3"/>
<dbReference type="EMBL" id="X68656">
    <property type="protein sequence ID" value="CAA48623.1"/>
    <property type="molecule type" value="mRNA"/>
</dbReference>
<dbReference type="PIR" id="S49198">
    <property type="entry name" value="S49198"/>
</dbReference>
<dbReference type="SMR" id="Q43766"/>
<dbReference type="ExpressionAtlas" id="Q43766">
    <property type="expression patterns" value="baseline and differential"/>
</dbReference>
<dbReference type="GO" id="GO:0008289">
    <property type="term" value="F:lipid binding"/>
    <property type="evidence" value="ECO:0007669"/>
    <property type="project" value="UniProtKB-KW"/>
</dbReference>
<dbReference type="GO" id="GO:0006869">
    <property type="term" value="P:lipid transport"/>
    <property type="evidence" value="ECO:0007669"/>
    <property type="project" value="InterPro"/>
</dbReference>
<dbReference type="CDD" id="cd01960">
    <property type="entry name" value="nsLTP1"/>
    <property type="match status" value="1"/>
</dbReference>
<dbReference type="FunFam" id="1.10.110.10:FF:000002">
    <property type="entry name" value="Non-specific lipid-transfer protein"/>
    <property type="match status" value="1"/>
</dbReference>
<dbReference type="Gene3D" id="1.10.110.10">
    <property type="entry name" value="Plant lipid-transfer and hydrophobic proteins"/>
    <property type="match status" value="1"/>
</dbReference>
<dbReference type="InterPro" id="IPR036312">
    <property type="entry name" value="Bifun_inhib/LTP/seed_sf"/>
</dbReference>
<dbReference type="InterPro" id="IPR016140">
    <property type="entry name" value="Bifunc_inhib/LTP/seed_store"/>
</dbReference>
<dbReference type="InterPro" id="IPR000528">
    <property type="entry name" value="Plant_nsLTP"/>
</dbReference>
<dbReference type="PANTHER" id="PTHR33076">
    <property type="entry name" value="NON-SPECIFIC LIPID-TRANSFER PROTEIN 2-RELATED"/>
    <property type="match status" value="1"/>
</dbReference>
<dbReference type="Pfam" id="PF00234">
    <property type="entry name" value="Tryp_alpha_amyl"/>
    <property type="match status" value="1"/>
</dbReference>
<dbReference type="PRINTS" id="PR00382">
    <property type="entry name" value="LIPIDTRNSFER"/>
</dbReference>
<dbReference type="SMART" id="SM00499">
    <property type="entry name" value="AAI"/>
    <property type="match status" value="1"/>
</dbReference>
<dbReference type="SUPFAM" id="SSF47699">
    <property type="entry name" value="Bifunctional inhibitor/lipid-transfer protein/seed storage 2S albumin"/>
    <property type="match status" value="1"/>
</dbReference>
<dbReference type="PROSITE" id="PS00597">
    <property type="entry name" value="PLANT_LTP"/>
    <property type="match status" value="1"/>
</dbReference>
<name>NLTP3_HORVU</name>
<accession>Q43766</accession>
<organism>
    <name type="scientific">Hordeum vulgare</name>
    <name type="common">Barley</name>
    <dbReference type="NCBI Taxonomy" id="4513"/>
    <lineage>
        <taxon>Eukaryota</taxon>
        <taxon>Viridiplantae</taxon>
        <taxon>Streptophyta</taxon>
        <taxon>Embryophyta</taxon>
        <taxon>Tracheophyta</taxon>
        <taxon>Spermatophyta</taxon>
        <taxon>Magnoliopsida</taxon>
        <taxon>Liliopsida</taxon>
        <taxon>Poales</taxon>
        <taxon>Poaceae</taxon>
        <taxon>BOP clade</taxon>
        <taxon>Pooideae</taxon>
        <taxon>Triticodae</taxon>
        <taxon>Triticeae</taxon>
        <taxon>Hordeinae</taxon>
        <taxon>Hordeum</taxon>
    </lineage>
</organism>
<keyword id="KW-1015">Disulfide bond</keyword>
<keyword id="KW-0446">Lipid-binding</keyword>
<keyword id="KW-0732">Signal</keyword>
<keyword id="KW-0813">Transport</keyword>
<reference key="1">
    <citation type="journal article" date="1993" name="Plant J.">
        <title>Developmental and pathogen-induced expression of three barley genes encoding lipid transfer proteins.</title>
        <authorList>
            <person name="Molina A."/>
            <person name="Garcia-Olmedo F."/>
        </authorList>
    </citation>
    <scope>NUCLEOTIDE SEQUENCE [MRNA]</scope>
    <source>
        <strain>cv. Bomi</strain>
        <tissue>Etiolated leaf</tissue>
    </source>
</reference>